<proteinExistence type="inferred from homology"/>
<gene>
    <name evidence="1" type="primary">eif2g</name>
    <name type="ordered locus">Mevan_0523</name>
</gene>
<reference key="1">
    <citation type="submission" date="2007-06" db="EMBL/GenBank/DDBJ databases">
        <title>Complete sequence of Methanococcus vannielii SB.</title>
        <authorList>
            <consortium name="US DOE Joint Genome Institute"/>
            <person name="Copeland A."/>
            <person name="Lucas S."/>
            <person name="Lapidus A."/>
            <person name="Barry K."/>
            <person name="Glavina del Rio T."/>
            <person name="Dalin E."/>
            <person name="Tice H."/>
            <person name="Pitluck S."/>
            <person name="Chain P."/>
            <person name="Malfatti S."/>
            <person name="Shin M."/>
            <person name="Vergez L."/>
            <person name="Schmutz J."/>
            <person name="Larimer F."/>
            <person name="Land M."/>
            <person name="Hauser L."/>
            <person name="Kyrpides N."/>
            <person name="Anderson I."/>
            <person name="Sieprawska-Lupa M."/>
            <person name="Whitman W.B."/>
            <person name="Richardson P."/>
        </authorList>
    </citation>
    <scope>NUCLEOTIDE SEQUENCE [LARGE SCALE GENOMIC DNA]</scope>
    <source>
        <strain>ATCC 35089 / DSM 1224 / JCM 13029 / OCM 148 / SB</strain>
    </source>
</reference>
<feature type="chain" id="PRO_1000015791" description="Translation initiation factor 2 subunit gamma">
    <location>
        <begin position="1"/>
        <end position="410"/>
    </location>
</feature>
<feature type="domain" description="tr-type G" evidence="1">
    <location>
        <begin position="6"/>
        <end position="203"/>
    </location>
</feature>
<feature type="region of interest" description="G1" evidence="1">
    <location>
        <begin position="15"/>
        <end position="22"/>
    </location>
</feature>
<feature type="region of interest" description="G2" evidence="1">
    <location>
        <begin position="43"/>
        <end position="47"/>
    </location>
</feature>
<feature type="region of interest" description="G3" evidence="1">
    <location>
        <begin position="90"/>
        <end position="93"/>
    </location>
</feature>
<feature type="region of interest" description="G4" evidence="1">
    <location>
        <begin position="146"/>
        <end position="149"/>
    </location>
</feature>
<feature type="region of interest" description="G5" evidence="1">
    <location>
        <begin position="181"/>
        <end position="183"/>
    </location>
</feature>
<feature type="binding site" evidence="1">
    <location>
        <begin position="18"/>
        <end position="23"/>
    </location>
    <ligand>
        <name>GTP</name>
        <dbReference type="ChEBI" id="CHEBI:37565"/>
    </ligand>
</feature>
<feature type="binding site" evidence="1">
    <location>
        <position position="18"/>
    </location>
    <ligand>
        <name>Mg(2+)</name>
        <dbReference type="ChEBI" id="CHEBI:18420"/>
        <label>2</label>
    </ligand>
</feature>
<feature type="binding site" evidence="1">
    <location>
        <position position="22"/>
    </location>
    <ligand>
        <name>Mg(2+)</name>
        <dbReference type="ChEBI" id="CHEBI:18420"/>
        <label>1</label>
    </ligand>
</feature>
<feature type="binding site" evidence="1">
    <location>
        <position position="43"/>
    </location>
    <ligand>
        <name>Mg(2+)</name>
        <dbReference type="ChEBI" id="CHEBI:18420"/>
        <label>2</label>
    </ligand>
</feature>
<feature type="binding site" evidence="1">
    <location>
        <position position="45"/>
    </location>
    <ligand>
        <name>Mg(2+)</name>
        <dbReference type="ChEBI" id="CHEBI:18420"/>
        <label>1</label>
    </ligand>
</feature>
<feature type="binding site" evidence="1">
    <location>
        <position position="58"/>
    </location>
    <ligand>
        <name>Zn(2+)</name>
        <dbReference type="ChEBI" id="CHEBI:29105"/>
    </ligand>
</feature>
<feature type="binding site" evidence="1">
    <location>
        <position position="61"/>
    </location>
    <ligand>
        <name>Zn(2+)</name>
        <dbReference type="ChEBI" id="CHEBI:29105"/>
    </ligand>
</feature>
<feature type="binding site" evidence="1">
    <location>
        <position position="73"/>
    </location>
    <ligand>
        <name>Zn(2+)</name>
        <dbReference type="ChEBI" id="CHEBI:29105"/>
    </ligand>
</feature>
<feature type="binding site" evidence="1">
    <location>
        <position position="76"/>
    </location>
    <ligand>
        <name>Zn(2+)</name>
        <dbReference type="ChEBI" id="CHEBI:29105"/>
    </ligand>
</feature>
<feature type="binding site" evidence="1">
    <location>
        <begin position="146"/>
        <end position="149"/>
    </location>
    <ligand>
        <name>GTP</name>
        <dbReference type="ChEBI" id="CHEBI:37565"/>
    </ligand>
</feature>
<feature type="binding site" evidence="1">
    <location>
        <begin position="181"/>
        <end position="183"/>
    </location>
    <ligand>
        <name>GTP</name>
        <dbReference type="ChEBI" id="CHEBI:37565"/>
    </ligand>
</feature>
<evidence type="ECO:0000255" key="1">
    <source>
        <dbReference type="HAMAP-Rule" id="MF_00119"/>
    </source>
</evidence>
<accession>A6UPK8</accession>
<dbReference type="EC" id="3.6.5.3" evidence="1"/>
<dbReference type="EMBL" id="CP000742">
    <property type="protein sequence ID" value="ABR54430.1"/>
    <property type="molecule type" value="Genomic_DNA"/>
</dbReference>
<dbReference type="RefSeq" id="WP_011972333.1">
    <property type="nucleotide sequence ID" value="NC_009634.1"/>
</dbReference>
<dbReference type="SMR" id="A6UPK8"/>
<dbReference type="STRING" id="406327.Mevan_0523"/>
<dbReference type="GeneID" id="5325730"/>
<dbReference type="KEGG" id="mvn:Mevan_0523"/>
<dbReference type="eggNOG" id="arCOG01563">
    <property type="taxonomic scope" value="Archaea"/>
</dbReference>
<dbReference type="HOGENOM" id="CLU_027154_0_1_2"/>
<dbReference type="OrthoDB" id="7798at2157"/>
<dbReference type="Proteomes" id="UP000001107">
    <property type="component" value="Chromosome"/>
</dbReference>
<dbReference type="GO" id="GO:0005829">
    <property type="term" value="C:cytosol"/>
    <property type="evidence" value="ECO:0007669"/>
    <property type="project" value="TreeGrafter"/>
</dbReference>
<dbReference type="GO" id="GO:0005525">
    <property type="term" value="F:GTP binding"/>
    <property type="evidence" value="ECO:0007669"/>
    <property type="project" value="UniProtKB-UniRule"/>
</dbReference>
<dbReference type="GO" id="GO:0003924">
    <property type="term" value="F:GTPase activity"/>
    <property type="evidence" value="ECO:0007669"/>
    <property type="project" value="InterPro"/>
</dbReference>
<dbReference type="GO" id="GO:0046872">
    <property type="term" value="F:metal ion binding"/>
    <property type="evidence" value="ECO:0007669"/>
    <property type="project" value="UniProtKB-KW"/>
</dbReference>
<dbReference type="GO" id="GO:0003746">
    <property type="term" value="F:translation elongation factor activity"/>
    <property type="evidence" value="ECO:0007669"/>
    <property type="project" value="UniProtKB-UniRule"/>
</dbReference>
<dbReference type="GO" id="GO:0003743">
    <property type="term" value="F:translation initiation factor activity"/>
    <property type="evidence" value="ECO:0007669"/>
    <property type="project" value="UniProtKB-KW"/>
</dbReference>
<dbReference type="GO" id="GO:0000049">
    <property type="term" value="F:tRNA binding"/>
    <property type="evidence" value="ECO:0007669"/>
    <property type="project" value="InterPro"/>
</dbReference>
<dbReference type="GO" id="GO:0001731">
    <property type="term" value="P:formation of translation preinitiation complex"/>
    <property type="evidence" value="ECO:0007669"/>
    <property type="project" value="TreeGrafter"/>
</dbReference>
<dbReference type="CDD" id="cd01888">
    <property type="entry name" value="eIF2_gamma"/>
    <property type="match status" value="1"/>
</dbReference>
<dbReference type="CDD" id="cd03688">
    <property type="entry name" value="eIF2_gamma_II"/>
    <property type="match status" value="1"/>
</dbReference>
<dbReference type="CDD" id="cd15490">
    <property type="entry name" value="eIF2_gamma_III"/>
    <property type="match status" value="1"/>
</dbReference>
<dbReference type="FunFam" id="2.40.30.10:FF:000009">
    <property type="entry name" value="Eukaryotic translation initiation factor 2 subunit gamma"/>
    <property type="match status" value="1"/>
</dbReference>
<dbReference type="FunFam" id="3.40.50.300:FF:000065">
    <property type="entry name" value="Eukaryotic translation initiation factor 2 subunit gamma"/>
    <property type="match status" value="1"/>
</dbReference>
<dbReference type="FunFam" id="2.40.30.10:FF:000075">
    <property type="entry name" value="Translation initiation factor 2 subunit gamma"/>
    <property type="match status" value="1"/>
</dbReference>
<dbReference type="Gene3D" id="3.40.50.300">
    <property type="entry name" value="P-loop containing nucleotide triphosphate hydrolases"/>
    <property type="match status" value="1"/>
</dbReference>
<dbReference type="Gene3D" id="2.40.30.10">
    <property type="entry name" value="Translation factors"/>
    <property type="match status" value="2"/>
</dbReference>
<dbReference type="HAMAP" id="MF_00119">
    <property type="entry name" value="eIF_2_gamma"/>
    <property type="match status" value="1"/>
</dbReference>
<dbReference type="InterPro" id="IPR004161">
    <property type="entry name" value="EFTu-like_2"/>
</dbReference>
<dbReference type="InterPro" id="IPR050543">
    <property type="entry name" value="eIF2G"/>
</dbReference>
<dbReference type="InterPro" id="IPR015256">
    <property type="entry name" value="eIF2g_C"/>
</dbReference>
<dbReference type="InterPro" id="IPR044127">
    <property type="entry name" value="eIF2g_dom_2"/>
</dbReference>
<dbReference type="InterPro" id="IPR044128">
    <property type="entry name" value="eIF2g_GTP-bd"/>
</dbReference>
<dbReference type="InterPro" id="IPR027417">
    <property type="entry name" value="P-loop_NTPase"/>
</dbReference>
<dbReference type="InterPro" id="IPR005225">
    <property type="entry name" value="Small_GTP-bd"/>
</dbReference>
<dbReference type="InterPro" id="IPR000795">
    <property type="entry name" value="T_Tr_GTP-bd_dom"/>
</dbReference>
<dbReference type="InterPro" id="IPR022424">
    <property type="entry name" value="TIF2_gsu"/>
</dbReference>
<dbReference type="InterPro" id="IPR009000">
    <property type="entry name" value="Transl_B-barrel_sf"/>
</dbReference>
<dbReference type="InterPro" id="IPR009001">
    <property type="entry name" value="Transl_elong_EF1A/Init_IF2_C"/>
</dbReference>
<dbReference type="NCBIfam" id="TIGR03680">
    <property type="entry name" value="eif2g_arch"/>
    <property type="match status" value="1"/>
</dbReference>
<dbReference type="NCBIfam" id="NF003077">
    <property type="entry name" value="PRK04000.1"/>
    <property type="match status" value="1"/>
</dbReference>
<dbReference type="NCBIfam" id="TIGR00231">
    <property type="entry name" value="small_GTP"/>
    <property type="match status" value="1"/>
</dbReference>
<dbReference type="PANTHER" id="PTHR42854">
    <property type="entry name" value="EUKARYOTIC TRANSLATION INITIATION FACTOR 2 SUBUNIT 3 FAMILY MEMBER"/>
    <property type="match status" value="1"/>
</dbReference>
<dbReference type="PANTHER" id="PTHR42854:SF3">
    <property type="entry name" value="EUKARYOTIC TRANSLATION INITIATION FACTOR 2 SUBUNIT 3-RELATED"/>
    <property type="match status" value="1"/>
</dbReference>
<dbReference type="Pfam" id="PF09173">
    <property type="entry name" value="eIF2_C"/>
    <property type="match status" value="1"/>
</dbReference>
<dbReference type="Pfam" id="PF00009">
    <property type="entry name" value="GTP_EFTU"/>
    <property type="match status" value="1"/>
</dbReference>
<dbReference type="Pfam" id="PF03144">
    <property type="entry name" value="GTP_EFTU_D2"/>
    <property type="match status" value="1"/>
</dbReference>
<dbReference type="PRINTS" id="PR00315">
    <property type="entry name" value="ELONGATNFCT"/>
</dbReference>
<dbReference type="SUPFAM" id="SSF50465">
    <property type="entry name" value="EF-Tu/eEF-1alpha/eIF2-gamma C-terminal domain"/>
    <property type="match status" value="1"/>
</dbReference>
<dbReference type="SUPFAM" id="SSF52540">
    <property type="entry name" value="P-loop containing nucleoside triphosphate hydrolases"/>
    <property type="match status" value="1"/>
</dbReference>
<dbReference type="SUPFAM" id="SSF50447">
    <property type="entry name" value="Translation proteins"/>
    <property type="match status" value="1"/>
</dbReference>
<dbReference type="PROSITE" id="PS51722">
    <property type="entry name" value="G_TR_2"/>
    <property type="match status" value="1"/>
</dbReference>
<keyword id="KW-0342">GTP-binding</keyword>
<keyword id="KW-0378">Hydrolase</keyword>
<keyword id="KW-0396">Initiation factor</keyword>
<keyword id="KW-0460">Magnesium</keyword>
<keyword id="KW-0479">Metal-binding</keyword>
<keyword id="KW-0547">Nucleotide-binding</keyword>
<keyword id="KW-0648">Protein biosynthesis</keyword>
<keyword id="KW-0862">Zinc</keyword>
<protein>
    <recommendedName>
        <fullName evidence="1">Translation initiation factor 2 subunit gamma</fullName>
        <ecNumber evidence="1">3.6.5.3</ecNumber>
    </recommendedName>
    <alternativeName>
        <fullName evidence="1">aIF2-gamma</fullName>
    </alternativeName>
    <alternativeName>
        <fullName evidence="1">eIF-2-gamma</fullName>
    </alternativeName>
</protein>
<comment type="function">
    <text evidence="1">eIF-2 functions in the early steps of protein synthesis by forming a ternary complex with GTP and initiator tRNA.</text>
</comment>
<comment type="catalytic activity">
    <reaction evidence="1">
        <text>GTP + H2O = GDP + phosphate + H(+)</text>
        <dbReference type="Rhea" id="RHEA:19669"/>
        <dbReference type="ChEBI" id="CHEBI:15377"/>
        <dbReference type="ChEBI" id="CHEBI:15378"/>
        <dbReference type="ChEBI" id="CHEBI:37565"/>
        <dbReference type="ChEBI" id="CHEBI:43474"/>
        <dbReference type="ChEBI" id="CHEBI:58189"/>
        <dbReference type="EC" id="3.6.5.3"/>
    </reaction>
</comment>
<comment type="cofactor">
    <cofactor evidence="1">
        <name>Mg(2+)</name>
        <dbReference type="ChEBI" id="CHEBI:18420"/>
    </cofactor>
</comment>
<comment type="subunit">
    <text evidence="1">Heterotrimer composed of an alpha, a beta and a gamma chain.</text>
</comment>
<comment type="similarity">
    <text evidence="1">Belongs to the TRAFAC class translation factor GTPase superfamily. Classic translation factor GTPase family. EIF2G subfamily.</text>
</comment>
<sequence>MVASNQSEVNIGMVGHVDHGKTSLTRKLTGVWTDTHSEELKRGISIRLGYADCEIKKCESCNEPECYTVDKKCDCCSGKVETLRKISFVDAPGHETLMATMLSGASLMDGAILVIAASEECPQPQTKEHLMALDALGVKNILIVQNKIDLVTEEQAVENYEQIQKFTKGTVAEKAPIIPVSAHHGANLDVLLKAIQEFIPTPKRDETVSPRLYVARSFDVNKPGSEIKDLKGGVIGGSIIQGILKVGDEIEIRPGSKVVEGNKTKWVPIITKIISLGAGSKKLKTALPGGLIGVGTELDPNLTKSDALSGSLAGIPGTLPETLEKITIRPQLLERVVGSQDELLIEPLKTNEVLMLNVGTSTTVGVTVSAKAEKVEIKLKLPVCADSGDRVAISRKIGSRWRLIGYGIIL</sequence>
<name>IF2G_METVS</name>
<organism>
    <name type="scientific">Methanococcus vannielii (strain ATCC 35089 / DSM 1224 / JCM 13029 / OCM 148 / SB)</name>
    <dbReference type="NCBI Taxonomy" id="406327"/>
    <lineage>
        <taxon>Archaea</taxon>
        <taxon>Methanobacteriati</taxon>
        <taxon>Methanobacteriota</taxon>
        <taxon>Methanomada group</taxon>
        <taxon>Methanococci</taxon>
        <taxon>Methanococcales</taxon>
        <taxon>Methanococcaceae</taxon>
        <taxon>Methanococcus</taxon>
    </lineage>
</organism>